<proteinExistence type="inferred from homology"/>
<comment type="function">
    <text evidence="1">DNA ligase that catalyzes the formation of phosphodiester linkages between 5'-phosphoryl and 3'-hydroxyl groups in double-stranded DNA using NAD as a coenzyme and as the energy source for the reaction. It is essential for DNA replication and repair of damaged DNA.</text>
</comment>
<comment type="catalytic activity">
    <reaction evidence="1">
        <text>NAD(+) + (deoxyribonucleotide)n-3'-hydroxyl + 5'-phospho-(deoxyribonucleotide)m = (deoxyribonucleotide)n+m + AMP + beta-nicotinamide D-nucleotide.</text>
        <dbReference type="EC" id="6.5.1.2"/>
    </reaction>
</comment>
<comment type="cofactor">
    <cofactor evidence="1">
        <name>Mg(2+)</name>
        <dbReference type="ChEBI" id="CHEBI:18420"/>
    </cofactor>
    <cofactor evidence="1">
        <name>Mn(2+)</name>
        <dbReference type="ChEBI" id="CHEBI:29035"/>
    </cofactor>
</comment>
<comment type="similarity">
    <text evidence="1">Belongs to the NAD-dependent DNA ligase family. LigA subfamily.</text>
</comment>
<sequence length="687" mass="76280">MKKADAAARARDLRERIRAADHAYYVLDQPVLADAEYDRLMHELQAIEAEHPELVTADSPTQRVSGAPSERFERVVHREPMLSLGNVQSDDELHEFDARVRRLLGLPEGEAVGYVVEPKLDGLAVELVYRDGAFTGGSTRGDGVNGEDVTANLRVVGGLGANRGVPHALEGTPPPRVEVRGEVLLFKEHFEAMNRQLVRAGDEPFANPRNAAAGTLRQLDWRVTARRPLSFVAYEALVPGGDPWRTHWEKLEALAAWGFETNPENRRCRGLGEVLAYRDRMAERRFELPYDTDGIVVKVDDLDWRRRLGAASKFPRWAVAFKYPPQEEATRIRRIWASVGRTGVLTPVVDFDPVRLSGAMVARATLHNEDEMRRKDILEGDWVLVRRAGEVIPEVVKPLPERRTGEERPFRFPAECPVCGARVVREEGEKVYRCTGAACPAQLVGRICHFAQRRALDIEGLGEKLAAGLVERGQVKDFADLYAVPFEVWQQLFSRPRKEQDAGAARELPEKSAQNMVAALERSRSTTLRRFLFALGIPQVGEATAATLARHFGDLARILDADEEALKGVRDVGPETASEIRAWTQEPQNRRVVERLLAAGVRPEPEVVEARGPFAGKTVVLTGGLSAMSRDDAKAEVERRGGKVSGSVSRKTDLVVAGEEAGSKLEKARSLGVRVVGEEEFVRLLKE</sequence>
<name>DNLJ_ANADE</name>
<evidence type="ECO:0000255" key="1">
    <source>
        <dbReference type="HAMAP-Rule" id="MF_01588"/>
    </source>
</evidence>
<reference key="1">
    <citation type="submission" date="2006-01" db="EMBL/GenBank/DDBJ databases">
        <title>Complete sequence of Anaeromyxobacter dehalogenans 2CP-C.</title>
        <authorList>
            <person name="Copeland A."/>
            <person name="Lucas S."/>
            <person name="Lapidus A."/>
            <person name="Barry K."/>
            <person name="Detter J.C."/>
            <person name="Glavina T."/>
            <person name="Hammon N."/>
            <person name="Israni S."/>
            <person name="Pitluck S."/>
            <person name="Brettin T."/>
            <person name="Bruce D."/>
            <person name="Han C."/>
            <person name="Tapia R."/>
            <person name="Gilna P."/>
            <person name="Kiss H."/>
            <person name="Schmutz J."/>
            <person name="Larimer F."/>
            <person name="Land M."/>
            <person name="Kyrpides N."/>
            <person name="Anderson I."/>
            <person name="Sanford R.A."/>
            <person name="Ritalahti K.M."/>
            <person name="Thomas H.S."/>
            <person name="Kirby J.R."/>
            <person name="Zhulin I.B."/>
            <person name="Loeffler F.E."/>
            <person name="Richardson P."/>
        </authorList>
    </citation>
    <scope>NUCLEOTIDE SEQUENCE [LARGE SCALE GENOMIC DNA]</scope>
    <source>
        <strain>2CP-C</strain>
    </source>
</reference>
<protein>
    <recommendedName>
        <fullName evidence="1">DNA ligase</fullName>
        <ecNumber evidence="1">6.5.1.2</ecNumber>
    </recommendedName>
    <alternativeName>
        <fullName evidence="1">Polydeoxyribonucleotide synthase [NAD(+)]</fullName>
    </alternativeName>
</protein>
<organism>
    <name type="scientific">Anaeromyxobacter dehalogenans (strain 2CP-C)</name>
    <dbReference type="NCBI Taxonomy" id="290397"/>
    <lineage>
        <taxon>Bacteria</taxon>
        <taxon>Pseudomonadati</taxon>
        <taxon>Myxococcota</taxon>
        <taxon>Myxococcia</taxon>
        <taxon>Myxococcales</taxon>
        <taxon>Cystobacterineae</taxon>
        <taxon>Anaeromyxobacteraceae</taxon>
        <taxon>Anaeromyxobacter</taxon>
    </lineage>
</organism>
<feature type="chain" id="PRO_0000313111" description="DNA ligase">
    <location>
        <begin position="1"/>
        <end position="687"/>
    </location>
</feature>
<feature type="domain" description="BRCT" evidence="1">
    <location>
        <begin position="609"/>
        <end position="687"/>
    </location>
</feature>
<feature type="active site" description="N6-AMP-lysine intermediate" evidence="1">
    <location>
        <position position="119"/>
    </location>
</feature>
<feature type="binding site" evidence="1">
    <location>
        <begin position="34"/>
        <end position="38"/>
    </location>
    <ligand>
        <name>NAD(+)</name>
        <dbReference type="ChEBI" id="CHEBI:57540"/>
    </ligand>
</feature>
<feature type="binding site" evidence="1">
    <location>
        <begin position="83"/>
        <end position="84"/>
    </location>
    <ligand>
        <name>NAD(+)</name>
        <dbReference type="ChEBI" id="CHEBI:57540"/>
    </ligand>
</feature>
<feature type="binding site" evidence="1">
    <location>
        <position position="117"/>
    </location>
    <ligand>
        <name>NAD(+)</name>
        <dbReference type="ChEBI" id="CHEBI:57540"/>
    </ligand>
</feature>
<feature type="binding site" evidence="1">
    <location>
        <position position="140"/>
    </location>
    <ligand>
        <name>NAD(+)</name>
        <dbReference type="ChEBI" id="CHEBI:57540"/>
    </ligand>
</feature>
<feature type="binding site" evidence="1">
    <location>
        <position position="182"/>
    </location>
    <ligand>
        <name>NAD(+)</name>
        <dbReference type="ChEBI" id="CHEBI:57540"/>
    </ligand>
</feature>
<feature type="binding site" evidence="1">
    <location>
        <position position="298"/>
    </location>
    <ligand>
        <name>NAD(+)</name>
        <dbReference type="ChEBI" id="CHEBI:57540"/>
    </ligand>
</feature>
<feature type="binding site" evidence="1">
    <location>
        <position position="322"/>
    </location>
    <ligand>
        <name>NAD(+)</name>
        <dbReference type="ChEBI" id="CHEBI:57540"/>
    </ligand>
</feature>
<feature type="binding site" evidence="1">
    <location>
        <position position="416"/>
    </location>
    <ligand>
        <name>Zn(2+)</name>
        <dbReference type="ChEBI" id="CHEBI:29105"/>
    </ligand>
</feature>
<feature type="binding site" evidence="1">
    <location>
        <position position="419"/>
    </location>
    <ligand>
        <name>Zn(2+)</name>
        <dbReference type="ChEBI" id="CHEBI:29105"/>
    </ligand>
</feature>
<feature type="binding site" evidence="1">
    <location>
        <position position="434"/>
    </location>
    <ligand>
        <name>Zn(2+)</name>
        <dbReference type="ChEBI" id="CHEBI:29105"/>
    </ligand>
</feature>
<feature type="binding site" evidence="1">
    <location>
        <position position="439"/>
    </location>
    <ligand>
        <name>Zn(2+)</name>
        <dbReference type="ChEBI" id="CHEBI:29105"/>
    </ligand>
</feature>
<accession>Q2INT9</accession>
<dbReference type="EC" id="6.5.1.2" evidence="1"/>
<dbReference type="EMBL" id="CP000251">
    <property type="protein sequence ID" value="ABC80469.1"/>
    <property type="molecule type" value="Genomic_DNA"/>
</dbReference>
<dbReference type="RefSeq" id="WP_011419752.1">
    <property type="nucleotide sequence ID" value="NC_007760.1"/>
</dbReference>
<dbReference type="SMR" id="Q2INT9"/>
<dbReference type="STRING" id="290397.Adeh_0693"/>
<dbReference type="KEGG" id="ade:Adeh_0693"/>
<dbReference type="eggNOG" id="COG0272">
    <property type="taxonomic scope" value="Bacteria"/>
</dbReference>
<dbReference type="HOGENOM" id="CLU_007764_2_1_7"/>
<dbReference type="OrthoDB" id="9759736at2"/>
<dbReference type="Proteomes" id="UP000001935">
    <property type="component" value="Chromosome"/>
</dbReference>
<dbReference type="GO" id="GO:0005829">
    <property type="term" value="C:cytosol"/>
    <property type="evidence" value="ECO:0007669"/>
    <property type="project" value="TreeGrafter"/>
</dbReference>
<dbReference type="GO" id="GO:0003677">
    <property type="term" value="F:DNA binding"/>
    <property type="evidence" value="ECO:0007669"/>
    <property type="project" value="InterPro"/>
</dbReference>
<dbReference type="GO" id="GO:0003911">
    <property type="term" value="F:DNA ligase (NAD+) activity"/>
    <property type="evidence" value="ECO:0007669"/>
    <property type="project" value="UniProtKB-UniRule"/>
</dbReference>
<dbReference type="GO" id="GO:0046872">
    <property type="term" value="F:metal ion binding"/>
    <property type="evidence" value="ECO:0007669"/>
    <property type="project" value="UniProtKB-KW"/>
</dbReference>
<dbReference type="GO" id="GO:0006281">
    <property type="term" value="P:DNA repair"/>
    <property type="evidence" value="ECO:0007669"/>
    <property type="project" value="UniProtKB-KW"/>
</dbReference>
<dbReference type="GO" id="GO:0006260">
    <property type="term" value="P:DNA replication"/>
    <property type="evidence" value="ECO:0007669"/>
    <property type="project" value="UniProtKB-KW"/>
</dbReference>
<dbReference type="CDD" id="cd17748">
    <property type="entry name" value="BRCT_DNA_ligase_like"/>
    <property type="match status" value="1"/>
</dbReference>
<dbReference type="CDD" id="cd00114">
    <property type="entry name" value="LIGANc"/>
    <property type="match status" value="1"/>
</dbReference>
<dbReference type="FunFam" id="1.10.150.20:FF:000006">
    <property type="entry name" value="DNA ligase"/>
    <property type="match status" value="1"/>
</dbReference>
<dbReference type="FunFam" id="1.10.287.610:FF:000002">
    <property type="entry name" value="DNA ligase"/>
    <property type="match status" value="1"/>
</dbReference>
<dbReference type="Gene3D" id="6.20.10.30">
    <property type="match status" value="1"/>
</dbReference>
<dbReference type="Gene3D" id="1.10.150.20">
    <property type="entry name" value="5' to 3' exonuclease, C-terminal subdomain"/>
    <property type="match status" value="2"/>
</dbReference>
<dbReference type="Gene3D" id="3.40.50.10190">
    <property type="entry name" value="BRCT domain"/>
    <property type="match status" value="1"/>
</dbReference>
<dbReference type="Gene3D" id="3.30.470.30">
    <property type="entry name" value="DNA ligase/mRNA capping enzyme"/>
    <property type="match status" value="1"/>
</dbReference>
<dbReference type="Gene3D" id="1.10.287.610">
    <property type="entry name" value="Helix hairpin bin"/>
    <property type="match status" value="1"/>
</dbReference>
<dbReference type="Gene3D" id="2.40.50.140">
    <property type="entry name" value="Nucleic acid-binding proteins"/>
    <property type="match status" value="1"/>
</dbReference>
<dbReference type="HAMAP" id="MF_01588">
    <property type="entry name" value="DNA_ligase_A"/>
    <property type="match status" value="1"/>
</dbReference>
<dbReference type="InterPro" id="IPR001357">
    <property type="entry name" value="BRCT_dom"/>
</dbReference>
<dbReference type="InterPro" id="IPR036420">
    <property type="entry name" value="BRCT_dom_sf"/>
</dbReference>
<dbReference type="InterPro" id="IPR041663">
    <property type="entry name" value="DisA/LigA_HHH"/>
</dbReference>
<dbReference type="InterPro" id="IPR001679">
    <property type="entry name" value="DNA_ligase"/>
</dbReference>
<dbReference type="InterPro" id="IPR018239">
    <property type="entry name" value="DNA_ligase_AS"/>
</dbReference>
<dbReference type="InterPro" id="IPR033136">
    <property type="entry name" value="DNA_ligase_CS"/>
</dbReference>
<dbReference type="InterPro" id="IPR013839">
    <property type="entry name" value="DNAligase_adenylation"/>
</dbReference>
<dbReference type="InterPro" id="IPR013840">
    <property type="entry name" value="DNAligase_N"/>
</dbReference>
<dbReference type="InterPro" id="IPR003583">
    <property type="entry name" value="Hlx-hairpin-Hlx_DNA-bd_motif"/>
</dbReference>
<dbReference type="InterPro" id="IPR012340">
    <property type="entry name" value="NA-bd_OB-fold"/>
</dbReference>
<dbReference type="InterPro" id="IPR004150">
    <property type="entry name" value="NAD_DNA_ligase_OB"/>
</dbReference>
<dbReference type="InterPro" id="IPR010994">
    <property type="entry name" value="RuvA_2-like"/>
</dbReference>
<dbReference type="InterPro" id="IPR004149">
    <property type="entry name" value="Znf_DNAligase_C4"/>
</dbReference>
<dbReference type="NCBIfam" id="TIGR00575">
    <property type="entry name" value="dnlj"/>
    <property type="match status" value="1"/>
</dbReference>
<dbReference type="NCBIfam" id="NF005932">
    <property type="entry name" value="PRK07956.1"/>
    <property type="match status" value="1"/>
</dbReference>
<dbReference type="PANTHER" id="PTHR23389">
    <property type="entry name" value="CHROMOSOME TRANSMISSION FIDELITY FACTOR 18"/>
    <property type="match status" value="1"/>
</dbReference>
<dbReference type="PANTHER" id="PTHR23389:SF9">
    <property type="entry name" value="DNA LIGASE"/>
    <property type="match status" value="1"/>
</dbReference>
<dbReference type="Pfam" id="PF00533">
    <property type="entry name" value="BRCT"/>
    <property type="match status" value="1"/>
</dbReference>
<dbReference type="Pfam" id="PF01653">
    <property type="entry name" value="DNA_ligase_aden"/>
    <property type="match status" value="1"/>
</dbReference>
<dbReference type="Pfam" id="PF03120">
    <property type="entry name" value="DNA_ligase_OB"/>
    <property type="match status" value="1"/>
</dbReference>
<dbReference type="Pfam" id="PF03119">
    <property type="entry name" value="DNA_ligase_ZBD"/>
    <property type="match status" value="1"/>
</dbReference>
<dbReference type="Pfam" id="PF12826">
    <property type="entry name" value="HHH_2"/>
    <property type="match status" value="1"/>
</dbReference>
<dbReference type="Pfam" id="PF22745">
    <property type="entry name" value="Nlig-Ia"/>
    <property type="match status" value="1"/>
</dbReference>
<dbReference type="PIRSF" id="PIRSF001604">
    <property type="entry name" value="LigA"/>
    <property type="match status" value="1"/>
</dbReference>
<dbReference type="SMART" id="SM00292">
    <property type="entry name" value="BRCT"/>
    <property type="match status" value="1"/>
</dbReference>
<dbReference type="SMART" id="SM00278">
    <property type="entry name" value="HhH1"/>
    <property type="match status" value="3"/>
</dbReference>
<dbReference type="SMART" id="SM00532">
    <property type="entry name" value="LIGANc"/>
    <property type="match status" value="1"/>
</dbReference>
<dbReference type="SUPFAM" id="SSF52113">
    <property type="entry name" value="BRCT domain"/>
    <property type="match status" value="1"/>
</dbReference>
<dbReference type="SUPFAM" id="SSF56091">
    <property type="entry name" value="DNA ligase/mRNA capping enzyme, catalytic domain"/>
    <property type="match status" value="1"/>
</dbReference>
<dbReference type="SUPFAM" id="SSF50249">
    <property type="entry name" value="Nucleic acid-binding proteins"/>
    <property type="match status" value="1"/>
</dbReference>
<dbReference type="SUPFAM" id="SSF47781">
    <property type="entry name" value="RuvA domain 2-like"/>
    <property type="match status" value="1"/>
</dbReference>
<dbReference type="PROSITE" id="PS50172">
    <property type="entry name" value="BRCT"/>
    <property type="match status" value="1"/>
</dbReference>
<dbReference type="PROSITE" id="PS01055">
    <property type="entry name" value="DNA_LIGASE_N1"/>
    <property type="match status" value="1"/>
</dbReference>
<dbReference type="PROSITE" id="PS01056">
    <property type="entry name" value="DNA_LIGASE_N2"/>
    <property type="match status" value="1"/>
</dbReference>
<gene>
    <name evidence="1" type="primary">ligA</name>
    <name type="ordered locus">Adeh_0693</name>
</gene>
<keyword id="KW-0227">DNA damage</keyword>
<keyword id="KW-0234">DNA repair</keyword>
<keyword id="KW-0235">DNA replication</keyword>
<keyword id="KW-0436">Ligase</keyword>
<keyword id="KW-0460">Magnesium</keyword>
<keyword id="KW-0464">Manganese</keyword>
<keyword id="KW-0479">Metal-binding</keyword>
<keyword id="KW-0520">NAD</keyword>
<keyword id="KW-1185">Reference proteome</keyword>
<keyword id="KW-0862">Zinc</keyword>